<keyword id="KW-0025">Alternative splicing</keyword>
<keyword id="KW-0597">Phosphoprotein</keyword>
<keyword id="KW-1267">Proteomics identification</keyword>
<keyword id="KW-1185">Reference proteome</keyword>
<comment type="alternative products">
    <event type="alternative splicing"/>
    <isoform>
        <id>Q8N6N3-1</id>
        <name>1</name>
        <sequence type="displayed"/>
    </isoform>
    <isoform>
        <id>Q8N6N3-2</id>
        <name>2</name>
        <name>GM117 form A</name>
        <sequence type="described" ref="VSP_021269 VSP_021270"/>
    </isoform>
    <isoform>
        <id>Q8N6N3-3</id>
        <name>3</name>
        <name>GM117 form B</name>
        <sequence type="described" ref="VSP_021267 VSP_021268"/>
    </isoform>
</comment>
<comment type="tissue specificity">
    <text evidence="2">Expressed in all tissues tested including heart, placenta, liver, skeletal muscle, kidney and pancreas. Weak expression in brain and lung.</text>
</comment>
<comment type="similarity">
    <text evidence="6">Belongs to the UPF0690 family.</text>
</comment>
<organism>
    <name type="scientific">Homo sapiens</name>
    <name type="common">Human</name>
    <dbReference type="NCBI Taxonomy" id="9606"/>
    <lineage>
        <taxon>Eukaryota</taxon>
        <taxon>Metazoa</taxon>
        <taxon>Chordata</taxon>
        <taxon>Craniata</taxon>
        <taxon>Vertebrata</taxon>
        <taxon>Euteleostomi</taxon>
        <taxon>Mammalia</taxon>
        <taxon>Eutheria</taxon>
        <taxon>Euarchontoglires</taxon>
        <taxon>Primates</taxon>
        <taxon>Haplorrhini</taxon>
        <taxon>Catarrhini</taxon>
        <taxon>Hominidae</taxon>
        <taxon>Homo</taxon>
    </lineage>
</organism>
<gene>
    <name type="primary">C1orf52</name>
    <name type="synonym">BAG</name>
    <name type="ORF">GM117</name>
</gene>
<evidence type="ECO:0000256" key="1">
    <source>
        <dbReference type="SAM" id="MobiDB-lite"/>
    </source>
</evidence>
<evidence type="ECO:0000269" key="2">
    <source>
    </source>
</evidence>
<evidence type="ECO:0000303" key="3">
    <source>
    </source>
</evidence>
<evidence type="ECO:0000303" key="4">
    <source>
    </source>
</evidence>
<evidence type="ECO:0000303" key="5">
    <source ref="2"/>
</evidence>
<evidence type="ECO:0000305" key="6"/>
<evidence type="ECO:0007744" key="7">
    <source>
    </source>
</evidence>
<evidence type="ECO:0007744" key="8">
    <source>
    </source>
</evidence>
<evidence type="ECO:0007744" key="9">
    <source>
    </source>
</evidence>
<evidence type="ECO:0007744" key="10">
    <source>
    </source>
</evidence>
<evidence type="ECO:0007744" key="11">
    <source>
    </source>
</evidence>
<evidence type="ECO:0007744" key="12">
    <source>
    </source>
</evidence>
<feature type="chain" id="PRO_0000254630" description="UPF0690 protein C1orf52">
    <location>
        <begin position="1"/>
        <end position="182"/>
    </location>
</feature>
<feature type="region of interest" description="Disordered" evidence="1">
    <location>
        <begin position="1"/>
        <end position="67"/>
    </location>
</feature>
<feature type="region of interest" description="Disordered" evidence="1">
    <location>
        <begin position="100"/>
        <end position="182"/>
    </location>
</feature>
<feature type="compositionally biased region" description="Acidic residues" evidence="1">
    <location>
        <begin position="23"/>
        <end position="32"/>
    </location>
</feature>
<feature type="compositionally biased region" description="Basic and acidic residues" evidence="1">
    <location>
        <begin position="50"/>
        <end position="63"/>
    </location>
</feature>
<feature type="compositionally biased region" description="Acidic residues" evidence="1">
    <location>
        <begin position="151"/>
        <end position="162"/>
    </location>
</feature>
<feature type="compositionally biased region" description="Basic and acidic residues" evidence="1">
    <location>
        <begin position="172"/>
        <end position="182"/>
    </location>
</feature>
<feature type="modified residue" description="Phosphothreonine" evidence="12">
    <location>
        <position position="67"/>
    </location>
</feature>
<feature type="modified residue" description="Phosphotyrosine" evidence="7">
    <location>
        <position position="132"/>
    </location>
</feature>
<feature type="modified residue" description="Phosphoserine" evidence="8 9 10 11 12">
    <location>
        <position position="158"/>
    </location>
</feature>
<feature type="splice variant" id="VSP_021267" description="In isoform 3." evidence="3 4 5">
    <original>PPKEFKIW</original>
    <variation>LLPETPSL</variation>
    <location>
        <begin position="93"/>
        <end position="100"/>
    </location>
</feature>
<feature type="splice variant" id="VSP_021268" description="In isoform 3." evidence="3 4 5">
    <location>
        <begin position="101"/>
        <end position="182"/>
    </location>
</feature>
<feature type="splice variant" id="VSP_021269" description="In isoform 2." evidence="3">
    <original>DDEKDEHTS</original>
    <variation>ALEDLEIQN</variation>
    <location>
        <begin position="159"/>
        <end position="167"/>
    </location>
</feature>
<feature type="splice variant" id="VSP_021270" description="In isoform 2." evidence="3">
    <location>
        <begin position="168"/>
        <end position="182"/>
    </location>
</feature>
<protein>
    <recommendedName>
        <fullName>UPF0690 protein C1orf52</fullName>
    </recommendedName>
    <alternativeName>
        <fullName>BCL10-associated gene protein</fullName>
    </alternativeName>
</protein>
<reference key="1">
    <citation type="journal article" date="2002" name="Gene">
        <title>Identification of six novel genes by experimental validation of GeneMachine predicted genes.</title>
        <authorList>
            <person name="Makalowska I."/>
            <person name="Sood R."/>
            <person name="Faruque M.U."/>
            <person name="Hu P."/>
            <person name="Robbins C.M."/>
            <person name="Eddings E.M."/>
            <person name="Mestre J.D."/>
            <person name="Baxevanis A.D."/>
            <person name="Carpten J.D."/>
        </authorList>
    </citation>
    <scope>NUCLEOTIDE SEQUENCE [MRNA] (ISOFORMS 2 AND 3)</scope>
    <scope>TISSUE SPECIFICITY</scope>
</reference>
<reference key="2">
    <citation type="submission" date="2003-11" db="EMBL/GenBank/DDBJ databases">
        <title>BAG (BCL10-associated gene) a highly conserved gene close to the tumor suppressor gene BCL10.</title>
        <authorList>
            <person name="Achuthan R."/>
            <person name="Carr I.M."/>
            <person name="Markham A.F."/>
        </authorList>
    </citation>
    <scope>NUCLEOTIDE SEQUENCE [MRNA] (ISOFORMS 1 AND 3)</scope>
</reference>
<reference key="3">
    <citation type="journal article" date="2004" name="Nat. Genet.">
        <title>Complete sequencing and characterization of 21,243 full-length human cDNAs.</title>
        <authorList>
            <person name="Ota T."/>
            <person name="Suzuki Y."/>
            <person name="Nishikawa T."/>
            <person name="Otsuki T."/>
            <person name="Sugiyama T."/>
            <person name="Irie R."/>
            <person name="Wakamatsu A."/>
            <person name="Hayashi K."/>
            <person name="Sato H."/>
            <person name="Nagai K."/>
            <person name="Kimura K."/>
            <person name="Makita H."/>
            <person name="Sekine M."/>
            <person name="Obayashi M."/>
            <person name="Nishi T."/>
            <person name="Shibahara T."/>
            <person name="Tanaka T."/>
            <person name="Ishii S."/>
            <person name="Yamamoto J."/>
            <person name="Saito K."/>
            <person name="Kawai Y."/>
            <person name="Isono Y."/>
            <person name="Nakamura Y."/>
            <person name="Nagahari K."/>
            <person name="Murakami K."/>
            <person name="Yasuda T."/>
            <person name="Iwayanagi T."/>
            <person name="Wagatsuma M."/>
            <person name="Shiratori A."/>
            <person name="Sudo H."/>
            <person name="Hosoiri T."/>
            <person name="Kaku Y."/>
            <person name="Kodaira H."/>
            <person name="Kondo H."/>
            <person name="Sugawara M."/>
            <person name="Takahashi M."/>
            <person name="Kanda K."/>
            <person name="Yokoi T."/>
            <person name="Furuya T."/>
            <person name="Kikkawa E."/>
            <person name="Omura Y."/>
            <person name="Abe K."/>
            <person name="Kamihara K."/>
            <person name="Katsuta N."/>
            <person name="Sato K."/>
            <person name="Tanikawa M."/>
            <person name="Yamazaki M."/>
            <person name="Ninomiya K."/>
            <person name="Ishibashi T."/>
            <person name="Yamashita H."/>
            <person name="Murakawa K."/>
            <person name="Fujimori K."/>
            <person name="Tanai H."/>
            <person name="Kimata M."/>
            <person name="Watanabe M."/>
            <person name="Hiraoka S."/>
            <person name="Chiba Y."/>
            <person name="Ishida S."/>
            <person name="Ono Y."/>
            <person name="Takiguchi S."/>
            <person name="Watanabe S."/>
            <person name="Yosida M."/>
            <person name="Hotuta T."/>
            <person name="Kusano J."/>
            <person name="Kanehori K."/>
            <person name="Takahashi-Fujii A."/>
            <person name="Hara H."/>
            <person name="Tanase T.-O."/>
            <person name="Nomura Y."/>
            <person name="Togiya S."/>
            <person name="Komai F."/>
            <person name="Hara R."/>
            <person name="Takeuchi K."/>
            <person name="Arita M."/>
            <person name="Imose N."/>
            <person name="Musashino K."/>
            <person name="Yuuki H."/>
            <person name="Oshima A."/>
            <person name="Sasaki N."/>
            <person name="Aotsuka S."/>
            <person name="Yoshikawa Y."/>
            <person name="Matsunawa H."/>
            <person name="Ichihara T."/>
            <person name="Shiohata N."/>
            <person name="Sano S."/>
            <person name="Moriya S."/>
            <person name="Momiyama H."/>
            <person name="Satoh N."/>
            <person name="Takami S."/>
            <person name="Terashima Y."/>
            <person name="Suzuki O."/>
            <person name="Nakagawa S."/>
            <person name="Senoh A."/>
            <person name="Mizoguchi H."/>
            <person name="Goto Y."/>
            <person name="Shimizu F."/>
            <person name="Wakebe H."/>
            <person name="Hishigaki H."/>
            <person name="Watanabe T."/>
            <person name="Sugiyama A."/>
            <person name="Takemoto M."/>
            <person name="Kawakami B."/>
            <person name="Yamazaki M."/>
            <person name="Watanabe K."/>
            <person name="Kumagai A."/>
            <person name="Itakura S."/>
            <person name="Fukuzumi Y."/>
            <person name="Fujimori Y."/>
            <person name="Komiyama M."/>
            <person name="Tashiro H."/>
            <person name="Tanigami A."/>
            <person name="Fujiwara T."/>
            <person name="Ono T."/>
            <person name="Yamada K."/>
            <person name="Fujii Y."/>
            <person name="Ozaki K."/>
            <person name="Hirao M."/>
            <person name="Ohmori Y."/>
            <person name="Kawabata A."/>
            <person name="Hikiji T."/>
            <person name="Kobatake N."/>
            <person name="Inagaki H."/>
            <person name="Ikema Y."/>
            <person name="Okamoto S."/>
            <person name="Okitani R."/>
            <person name="Kawakami T."/>
            <person name="Noguchi S."/>
            <person name="Itoh T."/>
            <person name="Shigeta K."/>
            <person name="Senba T."/>
            <person name="Matsumura K."/>
            <person name="Nakajima Y."/>
            <person name="Mizuno T."/>
            <person name="Morinaga M."/>
            <person name="Sasaki M."/>
            <person name="Togashi T."/>
            <person name="Oyama M."/>
            <person name="Hata H."/>
            <person name="Watanabe M."/>
            <person name="Komatsu T."/>
            <person name="Mizushima-Sugano J."/>
            <person name="Satoh T."/>
            <person name="Shirai Y."/>
            <person name="Takahashi Y."/>
            <person name="Nakagawa K."/>
            <person name="Okumura K."/>
            <person name="Nagase T."/>
            <person name="Nomura N."/>
            <person name="Kikuchi H."/>
            <person name="Masuho Y."/>
            <person name="Yamashita R."/>
            <person name="Nakai K."/>
            <person name="Yada T."/>
            <person name="Nakamura Y."/>
            <person name="Ohara O."/>
            <person name="Isogai T."/>
            <person name="Sugano S."/>
        </authorList>
    </citation>
    <scope>NUCLEOTIDE SEQUENCE [LARGE SCALE MRNA] (ISOFORM 3)</scope>
    <source>
        <tissue>Brain</tissue>
    </source>
</reference>
<reference key="4">
    <citation type="journal article" date="2006" name="Nature">
        <title>The DNA sequence and biological annotation of human chromosome 1.</title>
        <authorList>
            <person name="Gregory S.G."/>
            <person name="Barlow K.F."/>
            <person name="McLay K.E."/>
            <person name="Kaul R."/>
            <person name="Swarbreck D."/>
            <person name="Dunham A."/>
            <person name="Scott C.E."/>
            <person name="Howe K.L."/>
            <person name="Woodfine K."/>
            <person name="Spencer C.C.A."/>
            <person name="Jones M.C."/>
            <person name="Gillson C."/>
            <person name="Searle S."/>
            <person name="Zhou Y."/>
            <person name="Kokocinski F."/>
            <person name="McDonald L."/>
            <person name="Evans R."/>
            <person name="Phillips K."/>
            <person name="Atkinson A."/>
            <person name="Cooper R."/>
            <person name="Jones C."/>
            <person name="Hall R.E."/>
            <person name="Andrews T.D."/>
            <person name="Lloyd C."/>
            <person name="Ainscough R."/>
            <person name="Almeida J.P."/>
            <person name="Ambrose K.D."/>
            <person name="Anderson F."/>
            <person name="Andrew R.W."/>
            <person name="Ashwell R.I.S."/>
            <person name="Aubin K."/>
            <person name="Babbage A.K."/>
            <person name="Bagguley C.L."/>
            <person name="Bailey J."/>
            <person name="Beasley H."/>
            <person name="Bethel G."/>
            <person name="Bird C.P."/>
            <person name="Bray-Allen S."/>
            <person name="Brown J.Y."/>
            <person name="Brown A.J."/>
            <person name="Buckley D."/>
            <person name="Burton J."/>
            <person name="Bye J."/>
            <person name="Carder C."/>
            <person name="Chapman J.C."/>
            <person name="Clark S.Y."/>
            <person name="Clarke G."/>
            <person name="Clee C."/>
            <person name="Cobley V."/>
            <person name="Collier R.E."/>
            <person name="Corby N."/>
            <person name="Coville G.J."/>
            <person name="Davies J."/>
            <person name="Deadman R."/>
            <person name="Dunn M."/>
            <person name="Earthrowl M."/>
            <person name="Ellington A.G."/>
            <person name="Errington H."/>
            <person name="Frankish A."/>
            <person name="Frankland J."/>
            <person name="French L."/>
            <person name="Garner P."/>
            <person name="Garnett J."/>
            <person name="Gay L."/>
            <person name="Ghori M.R.J."/>
            <person name="Gibson R."/>
            <person name="Gilby L.M."/>
            <person name="Gillett W."/>
            <person name="Glithero R.J."/>
            <person name="Grafham D.V."/>
            <person name="Griffiths C."/>
            <person name="Griffiths-Jones S."/>
            <person name="Grocock R."/>
            <person name="Hammond S."/>
            <person name="Harrison E.S.I."/>
            <person name="Hart E."/>
            <person name="Haugen E."/>
            <person name="Heath P.D."/>
            <person name="Holmes S."/>
            <person name="Holt K."/>
            <person name="Howden P.J."/>
            <person name="Hunt A.R."/>
            <person name="Hunt S.E."/>
            <person name="Hunter G."/>
            <person name="Isherwood J."/>
            <person name="James R."/>
            <person name="Johnson C."/>
            <person name="Johnson D."/>
            <person name="Joy A."/>
            <person name="Kay M."/>
            <person name="Kershaw J.K."/>
            <person name="Kibukawa M."/>
            <person name="Kimberley A.M."/>
            <person name="King A."/>
            <person name="Knights A.J."/>
            <person name="Lad H."/>
            <person name="Laird G."/>
            <person name="Lawlor S."/>
            <person name="Leongamornlert D.A."/>
            <person name="Lloyd D.M."/>
            <person name="Loveland J."/>
            <person name="Lovell J."/>
            <person name="Lush M.J."/>
            <person name="Lyne R."/>
            <person name="Martin S."/>
            <person name="Mashreghi-Mohammadi M."/>
            <person name="Matthews L."/>
            <person name="Matthews N.S.W."/>
            <person name="McLaren S."/>
            <person name="Milne S."/>
            <person name="Mistry S."/>
            <person name="Moore M.J.F."/>
            <person name="Nickerson T."/>
            <person name="O'Dell C.N."/>
            <person name="Oliver K."/>
            <person name="Palmeiri A."/>
            <person name="Palmer S.A."/>
            <person name="Parker A."/>
            <person name="Patel D."/>
            <person name="Pearce A.V."/>
            <person name="Peck A.I."/>
            <person name="Pelan S."/>
            <person name="Phelps K."/>
            <person name="Phillimore B.J."/>
            <person name="Plumb R."/>
            <person name="Rajan J."/>
            <person name="Raymond C."/>
            <person name="Rouse G."/>
            <person name="Saenphimmachak C."/>
            <person name="Sehra H.K."/>
            <person name="Sheridan E."/>
            <person name="Shownkeen R."/>
            <person name="Sims S."/>
            <person name="Skuce C.D."/>
            <person name="Smith M."/>
            <person name="Steward C."/>
            <person name="Subramanian S."/>
            <person name="Sycamore N."/>
            <person name="Tracey A."/>
            <person name="Tromans A."/>
            <person name="Van Helmond Z."/>
            <person name="Wall M."/>
            <person name="Wallis J.M."/>
            <person name="White S."/>
            <person name="Whitehead S.L."/>
            <person name="Wilkinson J.E."/>
            <person name="Willey D.L."/>
            <person name="Williams H."/>
            <person name="Wilming L."/>
            <person name="Wray P.W."/>
            <person name="Wu Z."/>
            <person name="Coulson A."/>
            <person name="Vaudin M."/>
            <person name="Sulston J.E."/>
            <person name="Durbin R.M."/>
            <person name="Hubbard T."/>
            <person name="Wooster R."/>
            <person name="Dunham I."/>
            <person name="Carter N.P."/>
            <person name="McVean G."/>
            <person name="Ross M.T."/>
            <person name="Harrow J."/>
            <person name="Olson M.V."/>
            <person name="Beck S."/>
            <person name="Rogers J."/>
            <person name="Bentley D.R."/>
        </authorList>
    </citation>
    <scope>NUCLEOTIDE SEQUENCE [LARGE SCALE GENOMIC DNA]</scope>
</reference>
<reference key="5">
    <citation type="journal article" date="2004" name="Genome Res.">
        <title>The status, quality, and expansion of the NIH full-length cDNA project: the Mammalian Gene Collection (MGC).</title>
        <authorList>
            <consortium name="The MGC Project Team"/>
        </authorList>
    </citation>
    <scope>NUCLEOTIDE SEQUENCE [LARGE SCALE MRNA] (ISOFORM 1)</scope>
    <source>
        <tissue>Brain</tissue>
    </source>
</reference>
<reference key="6">
    <citation type="journal article" date="2005" name="Nat. Biotechnol.">
        <title>Immunoaffinity profiling of tyrosine phosphorylation in cancer cells.</title>
        <authorList>
            <person name="Rush J."/>
            <person name="Moritz A."/>
            <person name="Lee K.A."/>
            <person name="Guo A."/>
            <person name="Goss V.L."/>
            <person name="Spek E.J."/>
            <person name="Zhang H."/>
            <person name="Zha X.-M."/>
            <person name="Polakiewicz R.D."/>
            <person name="Comb M.J."/>
        </authorList>
    </citation>
    <scope>PHOSPHORYLATION [LARGE SCALE ANALYSIS] AT TYR-132</scope>
    <scope>IDENTIFICATION BY MASS SPECTROMETRY [LARGE SCALE ANALYSIS]</scope>
</reference>
<reference key="7">
    <citation type="journal article" date="2006" name="Cell">
        <title>Global, in vivo, and site-specific phosphorylation dynamics in signaling networks.</title>
        <authorList>
            <person name="Olsen J.V."/>
            <person name="Blagoev B."/>
            <person name="Gnad F."/>
            <person name="Macek B."/>
            <person name="Kumar C."/>
            <person name="Mortensen P."/>
            <person name="Mann M."/>
        </authorList>
    </citation>
    <scope>PHOSPHORYLATION [LARGE SCALE ANALYSIS] AT SER-158</scope>
    <scope>IDENTIFICATION BY MASS SPECTROMETRY [LARGE SCALE ANALYSIS]</scope>
    <source>
        <tissue>Cervix carcinoma</tissue>
    </source>
</reference>
<reference key="8">
    <citation type="journal article" date="2008" name="Proc. Natl. Acad. Sci. U.S.A.">
        <title>A quantitative atlas of mitotic phosphorylation.</title>
        <authorList>
            <person name="Dephoure N."/>
            <person name="Zhou C."/>
            <person name="Villen J."/>
            <person name="Beausoleil S.A."/>
            <person name="Bakalarski C.E."/>
            <person name="Elledge S.J."/>
            <person name="Gygi S.P."/>
        </authorList>
    </citation>
    <scope>PHOSPHORYLATION [LARGE SCALE ANALYSIS] AT SER-158</scope>
    <scope>IDENTIFICATION BY MASS SPECTROMETRY [LARGE SCALE ANALYSIS]</scope>
    <source>
        <tissue>Cervix carcinoma</tissue>
    </source>
</reference>
<reference key="9">
    <citation type="journal article" date="2009" name="Anal. Chem.">
        <title>Lys-N and trypsin cover complementary parts of the phosphoproteome in a refined SCX-based approach.</title>
        <authorList>
            <person name="Gauci S."/>
            <person name="Helbig A.O."/>
            <person name="Slijper M."/>
            <person name="Krijgsveld J."/>
            <person name="Heck A.J."/>
            <person name="Mohammed S."/>
        </authorList>
    </citation>
    <scope>IDENTIFICATION BY MASS SPECTROMETRY [LARGE SCALE ANALYSIS]</scope>
</reference>
<reference key="10">
    <citation type="journal article" date="2010" name="Sci. Signal.">
        <title>Quantitative phosphoproteomics reveals widespread full phosphorylation site occupancy during mitosis.</title>
        <authorList>
            <person name="Olsen J.V."/>
            <person name="Vermeulen M."/>
            <person name="Santamaria A."/>
            <person name="Kumar C."/>
            <person name="Miller M.L."/>
            <person name="Jensen L.J."/>
            <person name="Gnad F."/>
            <person name="Cox J."/>
            <person name="Jensen T.S."/>
            <person name="Nigg E.A."/>
            <person name="Brunak S."/>
            <person name="Mann M."/>
        </authorList>
    </citation>
    <scope>PHOSPHORYLATION [LARGE SCALE ANALYSIS] AT SER-158</scope>
    <scope>IDENTIFICATION BY MASS SPECTROMETRY [LARGE SCALE ANALYSIS]</scope>
    <source>
        <tissue>Cervix carcinoma</tissue>
    </source>
</reference>
<reference key="11">
    <citation type="journal article" date="2011" name="BMC Syst. Biol.">
        <title>Initial characterization of the human central proteome.</title>
        <authorList>
            <person name="Burkard T.R."/>
            <person name="Planyavsky M."/>
            <person name="Kaupe I."/>
            <person name="Breitwieser F.P."/>
            <person name="Buerckstuemmer T."/>
            <person name="Bennett K.L."/>
            <person name="Superti-Furga G."/>
            <person name="Colinge J."/>
        </authorList>
    </citation>
    <scope>IDENTIFICATION BY MASS SPECTROMETRY [LARGE SCALE ANALYSIS]</scope>
</reference>
<reference key="12">
    <citation type="journal article" date="2011" name="Sci. Signal.">
        <title>System-wide temporal characterization of the proteome and phosphoproteome of human embryonic stem cell differentiation.</title>
        <authorList>
            <person name="Rigbolt K.T."/>
            <person name="Prokhorova T.A."/>
            <person name="Akimov V."/>
            <person name="Henningsen J."/>
            <person name="Johansen P.T."/>
            <person name="Kratchmarova I."/>
            <person name="Kassem M."/>
            <person name="Mann M."/>
            <person name="Olsen J.V."/>
            <person name="Blagoev B."/>
        </authorList>
    </citation>
    <scope>PHOSPHORYLATION [LARGE SCALE ANALYSIS] AT SER-158</scope>
    <scope>IDENTIFICATION BY MASS SPECTROMETRY [LARGE SCALE ANALYSIS]</scope>
</reference>
<reference key="13">
    <citation type="journal article" date="2013" name="J. Proteome Res.">
        <title>Toward a comprehensive characterization of a human cancer cell phosphoproteome.</title>
        <authorList>
            <person name="Zhou H."/>
            <person name="Di Palma S."/>
            <person name="Preisinger C."/>
            <person name="Peng M."/>
            <person name="Polat A.N."/>
            <person name="Heck A.J."/>
            <person name="Mohammed S."/>
        </authorList>
    </citation>
    <scope>PHOSPHORYLATION [LARGE SCALE ANALYSIS] AT THR-67 AND SER-158</scope>
    <scope>IDENTIFICATION BY MASS SPECTROMETRY [LARGE SCALE ANALYSIS]</scope>
    <source>
        <tissue>Cervix carcinoma</tissue>
        <tissue>Erythroleukemia</tissue>
    </source>
</reference>
<dbReference type="EMBL" id="AF387611">
    <property type="protein sequence ID" value="AAL91352.1"/>
    <property type="molecule type" value="mRNA"/>
</dbReference>
<dbReference type="EMBL" id="AF387612">
    <property type="protein sequence ID" value="AAL91353.1"/>
    <property type="molecule type" value="mRNA"/>
</dbReference>
<dbReference type="EMBL" id="AY486331">
    <property type="protein sequence ID" value="AAS57906.1"/>
    <property type="molecule type" value="mRNA"/>
</dbReference>
<dbReference type="EMBL" id="AY486332">
    <property type="protein sequence ID" value="AAS57907.1"/>
    <property type="molecule type" value="mRNA"/>
</dbReference>
<dbReference type="EMBL" id="AK126929">
    <property type="protein sequence ID" value="BAG54401.1"/>
    <property type="molecule type" value="mRNA"/>
</dbReference>
<dbReference type="EMBL" id="AL590113">
    <property type="status" value="NOT_ANNOTATED_CDS"/>
    <property type="molecule type" value="Genomic_DNA"/>
</dbReference>
<dbReference type="EMBL" id="BC029538">
    <property type="protein sequence ID" value="AAH29538.1"/>
    <property type="molecule type" value="mRNA"/>
</dbReference>
<dbReference type="CCDS" id="CCDS703.1">
    <molecule id="Q8N6N3-1"/>
</dbReference>
<dbReference type="RefSeq" id="NP_932343.1">
    <molecule id="Q8N6N3-1"/>
    <property type="nucleotide sequence ID" value="NM_198077.4"/>
</dbReference>
<dbReference type="BioGRID" id="127149">
    <property type="interactions" value="55"/>
</dbReference>
<dbReference type="FunCoup" id="Q8N6N3">
    <property type="interactions" value="2333"/>
</dbReference>
<dbReference type="IntAct" id="Q8N6N3">
    <property type="interactions" value="38"/>
</dbReference>
<dbReference type="MINT" id="Q8N6N3"/>
<dbReference type="STRING" id="9606.ENSP00000419417"/>
<dbReference type="GlyGen" id="Q8N6N3">
    <property type="glycosylation" value="1 site, 1 O-linked glycan (1 site)"/>
</dbReference>
<dbReference type="iPTMnet" id="Q8N6N3"/>
<dbReference type="PhosphoSitePlus" id="Q8N6N3"/>
<dbReference type="BioMuta" id="C1orf52"/>
<dbReference type="jPOST" id="Q8N6N3"/>
<dbReference type="MassIVE" id="Q8N6N3"/>
<dbReference type="PaxDb" id="9606-ENSP00000419417"/>
<dbReference type="PeptideAtlas" id="Q8N6N3"/>
<dbReference type="ProteomicsDB" id="72204">
    <molecule id="Q8N6N3-1"/>
</dbReference>
<dbReference type="ProteomicsDB" id="72205">
    <molecule id="Q8N6N3-2"/>
</dbReference>
<dbReference type="ProteomicsDB" id="72206">
    <molecule id="Q8N6N3-3"/>
</dbReference>
<dbReference type="Pumba" id="Q8N6N3"/>
<dbReference type="Antibodypedia" id="33566">
    <property type="antibodies" value="42 antibodies from 8 providers"/>
</dbReference>
<dbReference type="DNASU" id="148423"/>
<dbReference type="Ensembl" id="ENST00000344356.5">
    <molecule id="Q8N6N3-2"/>
    <property type="protein sequence ID" value="ENSP00000345092.5"/>
    <property type="gene ID" value="ENSG00000162642.14"/>
</dbReference>
<dbReference type="Ensembl" id="ENST00000471115.6">
    <molecule id="Q8N6N3-1"/>
    <property type="protein sequence ID" value="ENSP00000419417.1"/>
    <property type="gene ID" value="ENSG00000162642.14"/>
</dbReference>
<dbReference type="GeneID" id="148423"/>
<dbReference type="KEGG" id="hsa:148423"/>
<dbReference type="MANE-Select" id="ENST00000471115.6">
    <property type="protein sequence ID" value="ENSP00000419417.1"/>
    <property type="RefSeq nucleotide sequence ID" value="NM_198077.4"/>
    <property type="RefSeq protein sequence ID" value="NP_932343.1"/>
</dbReference>
<dbReference type="UCSC" id="uc001dkv.4">
    <molecule id="Q8N6N3-1"/>
    <property type="organism name" value="human"/>
</dbReference>
<dbReference type="AGR" id="HGNC:24871"/>
<dbReference type="CTD" id="148423"/>
<dbReference type="DisGeNET" id="148423"/>
<dbReference type="GeneCards" id="C1orf52"/>
<dbReference type="HGNC" id="HGNC:24871">
    <property type="gene designation" value="C1orf52"/>
</dbReference>
<dbReference type="HPA" id="ENSG00000162642">
    <property type="expression patterns" value="Low tissue specificity"/>
</dbReference>
<dbReference type="neXtProt" id="NX_Q8N6N3"/>
<dbReference type="OpenTargets" id="ENSG00000162642"/>
<dbReference type="PharmGKB" id="PA142672503"/>
<dbReference type="VEuPathDB" id="HostDB:ENSG00000162642"/>
<dbReference type="eggNOG" id="ENOG502QVJV">
    <property type="taxonomic scope" value="Eukaryota"/>
</dbReference>
<dbReference type="GeneTree" id="ENSGT00390000017398"/>
<dbReference type="HOGENOM" id="CLU_127170_0_0_1"/>
<dbReference type="InParanoid" id="Q8N6N3"/>
<dbReference type="OMA" id="EDAPQPY"/>
<dbReference type="OrthoDB" id="1906229at2759"/>
<dbReference type="PAN-GO" id="Q8N6N3">
    <property type="GO annotations" value="0 GO annotations based on evolutionary models"/>
</dbReference>
<dbReference type="PhylomeDB" id="Q8N6N3"/>
<dbReference type="TreeFam" id="TF333299"/>
<dbReference type="PathwayCommons" id="Q8N6N3"/>
<dbReference type="SignaLink" id="Q8N6N3"/>
<dbReference type="BioGRID-ORCS" id="148423">
    <property type="hits" value="29 hits in 1123 CRISPR screens"/>
</dbReference>
<dbReference type="GenomeRNAi" id="148423"/>
<dbReference type="Pharos" id="Q8N6N3">
    <property type="development level" value="Tdark"/>
</dbReference>
<dbReference type="PRO" id="PR:Q8N6N3"/>
<dbReference type="Proteomes" id="UP000005640">
    <property type="component" value="Chromosome 1"/>
</dbReference>
<dbReference type="RNAct" id="Q8N6N3">
    <property type="molecule type" value="protein"/>
</dbReference>
<dbReference type="Bgee" id="ENSG00000162642">
    <property type="expression patterns" value="Expressed in upper arm skin and 190 other cell types or tissues"/>
</dbReference>
<dbReference type="GO" id="GO:0005654">
    <property type="term" value="C:nucleoplasm"/>
    <property type="evidence" value="ECO:0000314"/>
    <property type="project" value="HPA"/>
</dbReference>
<dbReference type="GO" id="GO:0003723">
    <property type="term" value="F:RNA binding"/>
    <property type="evidence" value="ECO:0007005"/>
    <property type="project" value="UniProtKB"/>
</dbReference>
<dbReference type="InterPro" id="IPR029089">
    <property type="entry name" value="DUF4660"/>
</dbReference>
<dbReference type="PANTHER" id="PTHR31833">
    <property type="entry name" value="UPF0690 PROTEIN C1ORF52"/>
    <property type="match status" value="1"/>
</dbReference>
<dbReference type="PANTHER" id="PTHR31833:SF2">
    <property type="entry name" value="UPF0690 PROTEIN C1ORF52"/>
    <property type="match status" value="1"/>
</dbReference>
<dbReference type="Pfam" id="PF15559">
    <property type="entry name" value="DUF4660"/>
    <property type="match status" value="1"/>
</dbReference>
<name>CA052_HUMAN</name>
<sequence>MAAEEKDPLSYFAAYGSSSSGSSDEEDNIEPEETSRRTPDPAKSAGGCRNKAEKRLPGPDELFRSVTRPAFLYNPLNKQIDWERHVVKAPEEPPKEFKIWKSNYVPPPETYTTEKKPPPPELDMAIKWSNIYEDNGDDAPQNAKKARLLPEGEETLESDDEKDEHTSKKRKVEPGEPAKKKK</sequence>
<proteinExistence type="evidence at protein level"/>
<accession>Q8N6N3</accession>
<accession>B3KX89</accession>
<accession>Q8TDK5</accession>
<accession>Q8TDK6</accession>